<organism>
    <name type="scientific">Bovine coronavirus (strain Ontario)</name>
    <name type="common">BCoV</name>
    <name type="synonym">BCV</name>
    <dbReference type="NCBI Taxonomy" id="231422"/>
    <lineage>
        <taxon>Viruses</taxon>
        <taxon>Riboviria</taxon>
        <taxon>Orthornavirae</taxon>
        <taxon>Pisuviricota</taxon>
        <taxon>Pisoniviricetes</taxon>
        <taxon>Nidovirales</taxon>
        <taxon>Cornidovirineae</taxon>
        <taxon>Coronaviridae</taxon>
        <taxon>Orthocoronavirinae</taxon>
        <taxon>Betacoronavirus</taxon>
        <taxon>Embecovirus</taxon>
        <taxon>Betacoronavirus 1</taxon>
    </lineage>
</organism>
<proteinExistence type="inferred from homology"/>
<accession>Q99H66</accession>
<accession>Q9QAR2</accession>
<evidence type="ECO:0000305" key="1"/>
<feature type="chain" id="PRO_0000283953" description="Non-structural protein of 12.7 kDa">
    <location>
        <begin position="1"/>
        <end position="109"/>
    </location>
</feature>
<feature type="sequence variant" description="In strain: Isolate BCO.43277.">
    <original>F</original>
    <variation>S</variation>
    <location>
        <position position="33"/>
    </location>
</feature>
<feature type="sequence variant" description="In strain: Isolate BCO.43277.">
    <original>S</original>
    <variation>T</variation>
    <location>
        <position position="43"/>
    </location>
</feature>
<comment type="similarity">
    <text evidence="1">Belongs to the coronaviruses ns12.7 protein family.</text>
</comment>
<protein>
    <recommendedName>
        <fullName>Non-structural protein of 12.7 kDa</fullName>
        <shortName>ns12.7</shortName>
    </recommendedName>
    <alternativeName>
        <fullName>12.7 kDa accessory protein</fullName>
    </alternativeName>
</protein>
<gene>
    <name type="ORF">5a</name>
</gene>
<reference key="1">
    <citation type="journal article" date="2001" name="Virus Res.">
        <title>Bovine coronaviruses associated with enteric and respiratory diseases in Canadian dairy cattle display different reactivities to anti-HE monoclonal antibodies and distinct amino acid changes in their HE, S and ns4.9 protein.</title>
        <authorList>
            <person name="Gelinas A.-M."/>
            <person name="Boutin M."/>
            <person name="Sasseville A.M.-J."/>
            <person name="Dea S."/>
        </authorList>
    </citation>
    <scope>NUCLEOTIDE SEQUENCE [GENOMIC RNA]</scope>
    <source>
        <strain>Isolate BCO.43277</strain>
        <strain>Isolate BCO.44175</strain>
    </source>
</reference>
<name>NS12_CVBON</name>
<dbReference type="EMBL" id="AH010241">
    <property type="protein sequence ID" value="AAG60547.1"/>
    <property type="molecule type" value="Genomic_RNA"/>
</dbReference>
<dbReference type="EMBL" id="AH010063">
    <property type="protein sequence ID" value="AAG40626.1"/>
    <property type="molecule type" value="Genomic_DNA"/>
</dbReference>
<dbReference type="RefSeq" id="NP_150080.1">
    <property type="nucleotide sequence ID" value="NC_003045.1"/>
</dbReference>
<dbReference type="KEGG" id="vg:1724647"/>
<dbReference type="InterPro" id="IPR006841">
    <property type="entry name" value="Corona_NS2"/>
</dbReference>
<dbReference type="Pfam" id="PF04753">
    <property type="entry name" value="Corona_NS12-7"/>
    <property type="match status" value="1"/>
</dbReference>
<organismHost>
    <name type="scientific">Bos taurus</name>
    <name type="common">Bovine</name>
    <dbReference type="NCBI Taxonomy" id="9913"/>
</organismHost>
<sequence length="109" mass="12778">MDIWKPEIKYLRYTNGFNVSELEDACFKFNYKFPKVGYCRVPSHAWCRNQGSFCATLTLYGKSKHYDKYFGVITGFTAFANTVEEAVNKLVFLAVDFITWRRQELNVYG</sequence>